<protein>
    <recommendedName>
        <fullName evidence="1">Serine--tRNA ligase</fullName>
        <ecNumber evidence="1">6.1.1.11</ecNumber>
    </recommendedName>
    <alternativeName>
        <fullName evidence="1">Seryl-tRNA synthetase</fullName>
        <shortName evidence="1">SerRS</shortName>
    </alternativeName>
    <alternativeName>
        <fullName evidence="1">Seryl-tRNA(Ser/Sec) synthetase</fullName>
    </alternativeName>
</protein>
<organism>
    <name type="scientific">Ehrlichia ruminantium (strain Welgevonden)</name>
    <dbReference type="NCBI Taxonomy" id="254945"/>
    <lineage>
        <taxon>Bacteria</taxon>
        <taxon>Pseudomonadati</taxon>
        <taxon>Pseudomonadota</taxon>
        <taxon>Alphaproteobacteria</taxon>
        <taxon>Rickettsiales</taxon>
        <taxon>Anaplasmataceae</taxon>
        <taxon>Ehrlichia</taxon>
    </lineage>
</organism>
<dbReference type="EC" id="6.1.1.11" evidence="1"/>
<dbReference type="EMBL" id="CR767821">
    <property type="protein sequence ID" value="CAH58182.1"/>
    <property type="molecule type" value="Genomic_DNA"/>
</dbReference>
<dbReference type="EMBL" id="CR925678">
    <property type="protein sequence ID" value="CAI26970.1"/>
    <property type="molecule type" value="Genomic_DNA"/>
</dbReference>
<dbReference type="RefSeq" id="WP_011155135.1">
    <property type="nucleotide sequence ID" value="NC_005295.2"/>
</dbReference>
<dbReference type="SMR" id="Q5HB76"/>
<dbReference type="GeneID" id="33057912"/>
<dbReference type="KEGG" id="eru:Erum4540"/>
<dbReference type="KEGG" id="erw:ERWE_CDS_04760"/>
<dbReference type="eggNOG" id="COG0172">
    <property type="taxonomic scope" value="Bacteria"/>
</dbReference>
<dbReference type="HOGENOM" id="CLU_023797_1_1_5"/>
<dbReference type="UniPathway" id="UPA00906">
    <property type="reaction ID" value="UER00895"/>
</dbReference>
<dbReference type="Proteomes" id="UP000001021">
    <property type="component" value="Chromosome"/>
</dbReference>
<dbReference type="GO" id="GO:0005737">
    <property type="term" value="C:cytoplasm"/>
    <property type="evidence" value="ECO:0007669"/>
    <property type="project" value="UniProtKB-SubCell"/>
</dbReference>
<dbReference type="GO" id="GO:0005524">
    <property type="term" value="F:ATP binding"/>
    <property type="evidence" value="ECO:0007669"/>
    <property type="project" value="UniProtKB-UniRule"/>
</dbReference>
<dbReference type="GO" id="GO:0004828">
    <property type="term" value="F:serine-tRNA ligase activity"/>
    <property type="evidence" value="ECO:0007669"/>
    <property type="project" value="UniProtKB-UniRule"/>
</dbReference>
<dbReference type="GO" id="GO:0016260">
    <property type="term" value="P:selenocysteine biosynthetic process"/>
    <property type="evidence" value="ECO:0007669"/>
    <property type="project" value="UniProtKB-UniRule"/>
</dbReference>
<dbReference type="GO" id="GO:0006434">
    <property type="term" value="P:seryl-tRNA aminoacylation"/>
    <property type="evidence" value="ECO:0007669"/>
    <property type="project" value="UniProtKB-UniRule"/>
</dbReference>
<dbReference type="CDD" id="cd00770">
    <property type="entry name" value="SerRS_core"/>
    <property type="match status" value="1"/>
</dbReference>
<dbReference type="Gene3D" id="3.30.930.10">
    <property type="entry name" value="Bira Bifunctional Protein, Domain 2"/>
    <property type="match status" value="1"/>
</dbReference>
<dbReference type="Gene3D" id="1.10.287.40">
    <property type="entry name" value="Serine-tRNA synthetase, tRNA binding domain"/>
    <property type="match status" value="1"/>
</dbReference>
<dbReference type="HAMAP" id="MF_00176">
    <property type="entry name" value="Ser_tRNA_synth_type1"/>
    <property type="match status" value="1"/>
</dbReference>
<dbReference type="InterPro" id="IPR002314">
    <property type="entry name" value="aa-tRNA-synt_IIb"/>
</dbReference>
<dbReference type="InterPro" id="IPR006195">
    <property type="entry name" value="aa-tRNA-synth_II"/>
</dbReference>
<dbReference type="InterPro" id="IPR045864">
    <property type="entry name" value="aa-tRNA-synth_II/BPL/LPL"/>
</dbReference>
<dbReference type="InterPro" id="IPR002317">
    <property type="entry name" value="Ser-tRNA-ligase_type_1"/>
</dbReference>
<dbReference type="InterPro" id="IPR015866">
    <property type="entry name" value="Ser-tRNA-synth_1_N"/>
</dbReference>
<dbReference type="InterPro" id="IPR042103">
    <property type="entry name" value="SerRS_1_N_sf"/>
</dbReference>
<dbReference type="InterPro" id="IPR033729">
    <property type="entry name" value="SerRS_core"/>
</dbReference>
<dbReference type="InterPro" id="IPR010978">
    <property type="entry name" value="tRNA-bd_arm"/>
</dbReference>
<dbReference type="NCBIfam" id="TIGR00414">
    <property type="entry name" value="serS"/>
    <property type="match status" value="1"/>
</dbReference>
<dbReference type="PANTHER" id="PTHR43697:SF1">
    <property type="entry name" value="SERINE--TRNA LIGASE"/>
    <property type="match status" value="1"/>
</dbReference>
<dbReference type="PANTHER" id="PTHR43697">
    <property type="entry name" value="SERYL-TRNA SYNTHETASE"/>
    <property type="match status" value="1"/>
</dbReference>
<dbReference type="Pfam" id="PF02403">
    <property type="entry name" value="Seryl_tRNA_N"/>
    <property type="match status" value="1"/>
</dbReference>
<dbReference type="Pfam" id="PF00587">
    <property type="entry name" value="tRNA-synt_2b"/>
    <property type="match status" value="1"/>
</dbReference>
<dbReference type="PIRSF" id="PIRSF001529">
    <property type="entry name" value="Ser-tRNA-synth_IIa"/>
    <property type="match status" value="1"/>
</dbReference>
<dbReference type="PRINTS" id="PR00981">
    <property type="entry name" value="TRNASYNTHSER"/>
</dbReference>
<dbReference type="SUPFAM" id="SSF55681">
    <property type="entry name" value="Class II aaRS and biotin synthetases"/>
    <property type="match status" value="1"/>
</dbReference>
<dbReference type="SUPFAM" id="SSF46589">
    <property type="entry name" value="tRNA-binding arm"/>
    <property type="match status" value="1"/>
</dbReference>
<dbReference type="PROSITE" id="PS50862">
    <property type="entry name" value="AA_TRNA_LIGASE_II"/>
    <property type="match status" value="1"/>
</dbReference>
<keyword id="KW-0030">Aminoacyl-tRNA synthetase</keyword>
<keyword id="KW-0067">ATP-binding</keyword>
<keyword id="KW-0963">Cytoplasm</keyword>
<keyword id="KW-0436">Ligase</keyword>
<keyword id="KW-0547">Nucleotide-binding</keyword>
<keyword id="KW-0648">Protein biosynthesis</keyword>
<name>SYS_EHRRW</name>
<feature type="chain" id="PRO_1000019678" description="Serine--tRNA ligase">
    <location>
        <begin position="1"/>
        <end position="427"/>
    </location>
</feature>
<feature type="binding site" evidence="1">
    <location>
        <begin position="228"/>
        <end position="230"/>
    </location>
    <ligand>
        <name>L-serine</name>
        <dbReference type="ChEBI" id="CHEBI:33384"/>
    </ligand>
</feature>
<feature type="binding site" evidence="1">
    <location>
        <begin position="259"/>
        <end position="261"/>
    </location>
    <ligand>
        <name>ATP</name>
        <dbReference type="ChEBI" id="CHEBI:30616"/>
    </ligand>
</feature>
<feature type="binding site" evidence="1">
    <location>
        <position position="282"/>
    </location>
    <ligand>
        <name>L-serine</name>
        <dbReference type="ChEBI" id="CHEBI:33384"/>
    </ligand>
</feature>
<feature type="binding site" evidence="1">
    <location>
        <begin position="346"/>
        <end position="349"/>
    </location>
    <ligand>
        <name>ATP</name>
        <dbReference type="ChEBI" id="CHEBI:30616"/>
    </ligand>
</feature>
<feature type="binding site" evidence="1">
    <location>
        <position position="384"/>
    </location>
    <ligand>
        <name>L-serine</name>
        <dbReference type="ChEBI" id="CHEBI:33384"/>
    </ligand>
</feature>
<evidence type="ECO:0000255" key="1">
    <source>
        <dbReference type="HAMAP-Rule" id="MF_00176"/>
    </source>
</evidence>
<gene>
    <name evidence="1" type="primary">serS</name>
    <name type="ordered locus">Erum4540</name>
    <name type="ordered locus">ERWE_CDS_04760</name>
</gene>
<reference key="1">
    <citation type="journal article" date="2005" name="Proc. Natl. Acad. Sci. U.S.A.">
        <title>The genome of the heartwater agent Ehrlichia ruminantium contains multiple tandem repeats of actively variable copy number.</title>
        <authorList>
            <person name="Collins N.E."/>
            <person name="Liebenberg J."/>
            <person name="de Villiers E.P."/>
            <person name="Brayton K.A."/>
            <person name="Louw E."/>
            <person name="Pretorius A."/>
            <person name="Faber F.E."/>
            <person name="van Heerden H."/>
            <person name="Josemans A."/>
            <person name="van Kleef M."/>
            <person name="Steyn H.C."/>
            <person name="van Strijp M.F."/>
            <person name="Zweygarth E."/>
            <person name="Jongejan F."/>
            <person name="Maillard J.C."/>
            <person name="Berthier D."/>
            <person name="Botha M."/>
            <person name="Joubert F."/>
            <person name="Corton C.H."/>
            <person name="Thomson N.R."/>
            <person name="Allsopp M.T."/>
            <person name="Allsopp B.A."/>
        </authorList>
    </citation>
    <scope>NUCLEOTIDE SEQUENCE [LARGE SCALE GENOMIC DNA]</scope>
    <source>
        <strain>Welgevonden</strain>
    </source>
</reference>
<reference key="2">
    <citation type="journal article" date="2006" name="J. Bacteriol.">
        <title>Comparative genomic analysis of three strains of Ehrlichia ruminantium reveals an active process of genome size plasticity.</title>
        <authorList>
            <person name="Frutos R."/>
            <person name="Viari A."/>
            <person name="Ferraz C."/>
            <person name="Morgat A."/>
            <person name="Eychenie S."/>
            <person name="Kandassamy Y."/>
            <person name="Chantal I."/>
            <person name="Bensaid A."/>
            <person name="Coissac E."/>
            <person name="Vachiery N."/>
            <person name="Demaille J."/>
            <person name="Martinez D."/>
        </authorList>
    </citation>
    <scope>NUCLEOTIDE SEQUENCE [LARGE SCALE GENOMIC DNA]</scope>
    <source>
        <strain>Welgevonden</strain>
    </source>
</reference>
<sequence length="427" mass="48876">MHDIDFIKNNPELFDEAMQNRNFGKIAHKIIELSANKKHTLTQLYSLQKERNNITQEIEKLKKDNIQCDTQIELSKEITKKINHINNMIKTDSELIDLLNILPNIPDKKVPIGKDENDNIEIRRYGKKVDFKFPPKTHYELGENLNLMDFKQAAKLSGSRFVILKSQLAQLDRALANFMLDVHTQEFGYSEISHPVLVHESAMYGVGQLPKFADDSFKTTDNFRLIPTSEVALTNLVSNTNTNANELPIRLTACSQCFRSEAGSAGKDVRGMMRQHQFNKVELVSIVTEEQSELELERMTQVAEEILKKLELPYRVMMLCTGDLGFSASITYDIEVWIPSQNQYREISSCSNCKAFQARRMNAKYHTISNGNKVNKFVHTLNGSALAIGRTIIAILENYQNQDGSITIPHVLRKYMNNQDIIKNNNY</sequence>
<proteinExistence type="inferred from homology"/>
<comment type="function">
    <text evidence="1">Catalyzes the attachment of serine to tRNA(Ser). Is also able to aminoacylate tRNA(Sec) with serine, to form the misacylated tRNA L-seryl-tRNA(Sec), which will be further converted into selenocysteinyl-tRNA(Sec).</text>
</comment>
<comment type="catalytic activity">
    <reaction evidence="1">
        <text>tRNA(Ser) + L-serine + ATP = L-seryl-tRNA(Ser) + AMP + diphosphate + H(+)</text>
        <dbReference type="Rhea" id="RHEA:12292"/>
        <dbReference type="Rhea" id="RHEA-COMP:9669"/>
        <dbReference type="Rhea" id="RHEA-COMP:9703"/>
        <dbReference type="ChEBI" id="CHEBI:15378"/>
        <dbReference type="ChEBI" id="CHEBI:30616"/>
        <dbReference type="ChEBI" id="CHEBI:33019"/>
        <dbReference type="ChEBI" id="CHEBI:33384"/>
        <dbReference type="ChEBI" id="CHEBI:78442"/>
        <dbReference type="ChEBI" id="CHEBI:78533"/>
        <dbReference type="ChEBI" id="CHEBI:456215"/>
        <dbReference type="EC" id="6.1.1.11"/>
    </reaction>
</comment>
<comment type="catalytic activity">
    <reaction evidence="1">
        <text>tRNA(Sec) + L-serine + ATP = L-seryl-tRNA(Sec) + AMP + diphosphate + H(+)</text>
        <dbReference type="Rhea" id="RHEA:42580"/>
        <dbReference type="Rhea" id="RHEA-COMP:9742"/>
        <dbReference type="Rhea" id="RHEA-COMP:10128"/>
        <dbReference type="ChEBI" id="CHEBI:15378"/>
        <dbReference type="ChEBI" id="CHEBI:30616"/>
        <dbReference type="ChEBI" id="CHEBI:33019"/>
        <dbReference type="ChEBI" id="CHEBI:33384"/>
        <dbReference type="ChEBI" id="CHEBI:78442"/>
        <dbReference type="ChEBI" id="CHEBI:78533"/>
        <dbReference type="ChEBI" id="CHEBI:456215"/>
        <dbReference type="EC" id="6.1.1.11"/>
    </reaction>
</comment>
<comment type="pathway">
    <text evidence="1">Aminoacyl-tRNA biosynthesis; selenocysteinyl-tRNA(Sec) biosynthesis; L-seryl-tRNA(Sec) from L-serine and tRNA(Sec): step 1/1.</text>
</comment>
<comment type="subunit">
    <text evidence="1">Homodimer. The tRNA molecule binds across the dimer.</text>
</comment>
<comment type="subcellular location">
    <subcellularLocation>
        <location evidence="1">Cytoplasm</location>
    </subcellularLocation>
</comment>
<comment type="domain">
    <text evidence="1">Consists of two distinct domains, a catalytic core and a N-terminal extension that is involved in tRNA binding.</text>
</comment>
<comment type="similarity">
    <text evidence="1">Belongs to the class-II aminoacyl-tRNA synthetase family. Type-1 seryl-tRNA synthetase subfamily.</text>
</comment>
<accession>Q5HB76</accession>
<accession>Q5FEJ6</accession>